<evidence type="ECO:0000255" key="1">
    <source>
        <dbReference type="HAMAP-Rule" id="MF_00501"/>
    </source>
</evidence>
<evidence type="ECO:0000305" key="2"/>
<sequence length="72" mass="8418">MKKKIHPRYSKITATCSCGNIIEIFSTINHNLNLDICAKCHPFYTGKQRVIDTGGRVERFKKRFKFTKQELN</sequence>
<protein>
    <recommendedName>
        <fullName evidence="1">Large ribosomal subunit protein bL31</fullName>
    </recommendedName>
    <alternativeName>
        <fullName evidence="2">50S ribosomal protein L31</fullName>
    </alternativeName>
</protein>
<feature type="chain" id="PRO_1000176951" description="Large ribosomal subunit protein bL31">
    <location>
        <begin position="1"/>
        <end position="72"/>
    </location>
</feature>
<feature type="binding site" evidence="1">
    <location>
        <position position="16"/>
    </location>
    <ligand>
        <name>Zn(2+)</name>
        <dbReference type="ChEBI" id="CHEBI:29105"/>
    </ligand>
</feature>
<feature type="binding site" evidence="1">
    <location>
        <position position="18"/>
    </location>
    <ligand>
        <name>Zn(2+)</name>
        <dbReference type="ChEBI" id="CHEBI:29105"/>
    </ligand>
</feature>
<feature type="binding site" evidence="1">
    <location>
        <position position="37"/>
    </location>
    <ligand>
        <name>Zn(2+)</name>
        <dbReference type="ChEBI" id="CHEBI:29105"/>
    </ligand>
</feature>
<feature type="binding site" evidence="1">
    <location>
        <position position="40"/>
    </location>
    <ligand>
        <name>Zn(2+)</name>
        <dbReference type="ChEBI" id="CHEBI:29105"/>
    </ligand>
</feature>
<gene>
    <name evidence="1" type="primary">rpmE</name>
    <name type="ordered locus">BUAP5A_570</name>
</gene>
<keyword id="KW-0479">Metal-binding</keyword>
<keyword id="KW-0687">Ribonucleoprotein</keyword>
<keyword id="KW-0689">Ribosomal protein</keyword>
<keyword id="KW-0694">RNA-binding</keyword>
<keyword id="KW-0699">rRNA-binding</keyword>
<keyword id="KW-0862">Zinc</keyword>
<organism>
    <name type="scientific">Buchnera aphidicola subsp. Acyrthosiphon pisum (strain 5A)</name>
    <dbReference type="NCBI Taxonomy" id="563178"/>
    <lineage>
        <taxon>Bacteria</taxon>
        <taxon>Pseudomonadati</taxon>
        <taxon>Pseudomonadota</taxon>
        <taxon>Gammaproteobacteria</taxon>
        <taxon>Enterobacterales</taxon>
        <taxon>Erwiniaceae</taxon>
        <taxon>Buchnera</taxon>
    </lineage>
</organism>
<proteinExistence type="inferred from homology"/>
<name>RL31_BUCA5</name>
<dbReference type="EMBL" id="CP001161">
    <property type="protein sequence ID" value="ACL30916.1"/>
    <property type="molecule type" value="Genomic_DNA"/>
</dbReference>
<dbReference type="RefSeq" id="WP_009874525.1">
    <property type="nucleotide sequence ID" value="NC_011833.1"/>
</dbReference>
<dbReference type="SMR" id="B8D8E0"/>
<dbReference type="KEGG" id="bap:BUAP5A_570"/>
<dbReference type="HOGENOM" id="CLU_114306_4_3_6"/>
<dbReference type="OrthoDB" id="9803251at2"/>
<dbReference type="Proteomes" id="UP000006904">
    <property type="component" value="Chromosome"/>
</dbReference>
<dbReference type="GO" id="GO:1990904">
    <property type="term" value="C:ribonucleoprotein complex"/>
    <property type="evidence" value="ECO:0007669"/>
    <property type="project" value="UniProtKB-KW"/>
</dbReference>
<dbReference type="GO" id="GO:0005840">
    <property type="term" value="C:ribosome"/>
    <property type="evidence" value="ECO:0007669"/>
    <property type="project" value="UniProtKB-KW"/>
</dbReference>
<dbReference type="GO" id="GO:0046872">
    <property type="term" value="F:metal ion binding"/>
    <property type="evidence" value="ECO:0007669"/>
    <property type="project" value="UniProtKB-KW"/>
</dbReference>
<dbReference type="GO" id="GO:0019843">
    <property type="term" value="F:rRNA binding"/>
    <property type="evidence" value="ECO:0007669"/>
    <property type="project" value="UniProtKB-KW"/>
</dbReference>
<dbReference type="GO" id="GO:0003735">
    <property type="term" value="F:structural constituent of ribosome"/>
    <property type="evidence" value="ECO:0007669"/>
    <property type="project" value="InterPro"/>
</dbReference>
<dbReference type="GO" id="GO:0006412">
    <property type="term" value="P:translation"/>
    <property type="evidence" value="ECO:0007669"/>
    <property type="project" value="UniProtKB-UniRule"/>
</dbReference>
<dbReference type="Gene3D" id="4.10.830.30">
    <property type="entry name" value="Ribosomal protein L31"/>
    <property type="match status" value="1"/>
</dbReference>
<dbReference type="HAMAP" id="MF_00501">
    <property type="entry name" value="Ribosomal_bL31_1"/>
    <property type="match status" value="1"/>
</dbReference>
<dbReference type="InterPro" id="IPR034704">
    <property type="entry name" value="Ribosomal_bL28/bL31-like_sf"/>
</dbReference>
<dbReference type="InterPro" id="IPR002150">
    <property type="entry name" value="Ribosomal_bL31"/>
</dbReference>
<dbReference type="InterPro" id="IPR027491">
    <property type="entry name" value="Ribosomal_bL31_A"/>
</dbReference>
<dbReference type="InterPro" id="IPR042105">
    <property type="entry name" value="Ribosomal_bL31_sf"/>
</dbReference>
<dbReference type="NCBIfam" id="TIGR00105">
    <property type="entry name" value="L31"/>
    <property type="match status" value="1"/>
</dbReference>
<dbReference type="NCBIfam" id="NF000612">
    <property type="entry name" value="PRK00019.1"/>
    <property type="match status" value="1"/>
</dbReference>
<dbReference type="PANTHER" id="PTHR33280">
    <property type="entry name" value="50S RIBOSOMAL PROTEIN L31, CHLOROPLASTIC"/>
    <property type="match status" value="1"/>
</dbReference>
<dbReference type="PANTHER" id="PTHR33280:SF6">
    <property type="entry name" value="LARGE RIBOSOMAL SUBUNIT PROTEIN BL31A"/>
    <property type="match status" value="1"/>
</dbReference>
<dbReference type="Pfam" id="PF01197">
    <property type="entry name" value="Ribosomal_L31"/>
    <property type="match status" value="1"/>
</dbReference>
<dbReference type="PRINTS" id="PR01249">
    <property type="entry name" value="RIBOSOMALL31"/>
</dbReference>
<dbReference type="SUPFAM" id="SSF143800">
    <property type="entry name" value="L28p-like"/>
    <property type="match status" value="1"/>
</dbReference>
<dbReference type="PROSITE" id="PS01143">
    <property type="entry name" value="RIBOSOMAL_L31"/>
    <property type="match status" value="1"/>
</dbReference>
<accession>B8D8E0</accession>
<reference key="1">
    <citation type="journal article" date="2009" name="Science">
        <title>The dynamics and time scale of ongoing genomic erosion in symbiotic bacteria.</title>
        <authorList>
            <person name="Moran N.A."/>
            <person name="McLaughlin H.J."/>
            <person name="Sorek R."/>
        </authorList>
    </citation>
    <scope>NUCLEOTIDE SEQUENCE [LARGE SCALE GENOMIC DNA]</scope>
    <source>
        <strain>5A</strain>
    </source>
</reference>
<comment type="function">
    <text evidence="1">Binds the 23S rRNA.</text>
</comment>
<comment type="cofactor">
    <cofactor evidence="1">
        <name>Zn(2+)</name>
        <dbReference type="ChEBI" id="CHEBI:29105"/>
    </cofactor>
    <text evidence="1">Binds 1 zinc ion per subunit.</text>
</comment>
<comment type="subunit">
    <text evidence="1">Part of the 50S ribosomal subunit.</text>
</comment>
<comment type="similarity">
    <text evidence="1">Belongs to the bacterial ribosomal protein bL31 family. Type A subfamily.</text>
</comment>